<keyword id="KW-0165">Cleavage on pair of basic residues</keyword>
<keyword id="KW-1015">Disulfide bond</keyword>
<keyword id="KW-0964">Secreted</keyword>
<keyword id="KW-0732">Signal</keyword>
<keyword id="KW-0800">Toxin</keyword>
<feature type="signal peptide" evidence="1">
    <location>
        <begin position="1"/>
        <end position="21"/>
    </location>
</feature>
<feature type="propeptide" id="PRO_0000435089" evidence="3">
    <location>
        <begin position="22"/>
        <end position="40"/>
    </location>
</feature>
<feature type="chain" id="PRO_0000435090" description="Teretoxin Tan15.2">
    <location>
        <begin position="41"/>
        <end position="77"/>
    </location>
</feature>
<reference key="1">
    <citation type="journal article" date="2015" name="Genome Biol. Evol.">
        <title>Molecular diversity and gene evolution of the venom arsenal of Terebridae predatory marine snails.</title>
        <authorList>
            <person name="Gorson J."/>
            <person name="Ramrattan G."/>
            <person name="Verdes A."/>
            <person name="Wright E.M."/>
            <person name="Kantor Y."/>
            <person name="Rajaram Srinivasan R."/>
            <person name="Musunuri R."/>
            <person name="Packer D."/>
            <person name="Albano G."/>
            <person name="Qiu W.G."/>
            <person name="Holford M."/>
        </authorList>
    </citation>
    <scope>NUCLEOTIDE SEQUENCE [MRNA]</scope>
    <source>
        <tissue>Venom duct</tissue>
    </source>
</reference>
<evidence type="ECO:0000255" key="1"/>
<evidence type="ECO:0000303" key="2">
    <source>
    </source>
</evidence>
<evidence type="ECO:0000305" key="3"/>
<evidence type="ECO:0000305" key="4">
    <source>
    </source>
</evidence>
<proteinExistence type="inferred from homology"/>
<protein>
    <recommendedName>
        <fullName evidence="2">Teretoxin Tan15.2</fullName>
    </recommendedName>
</protein>
<name>TF2_TERAN</name>
<accession>P0DN61</accession>
<sequence length="77" mass="8109">MTRLTVVFLAILVLLPLATSNSGADEAPASLSDLLHRTKRCAGGNQCTTDAECCGNYQCRCSLASNCSGSNPKKRCT</sequence>
<dbReference type="SMR" id="P0DN61"/>
<dbReference type="GO" id="GO:0005576">
    <property type="term" value="C:extracellular region"/>
    <property type="evidence" value="ECO:0007669"/>
    <property type="project" value="UniProtKB-SubCell"/>
</dbReference>
<dbReference type="GO" id="GO:0090729">
    <property type="term" value="F:toxin activity"/>
    <property type="evidence" value="ECO:0007669"/>
    <property type="project" value="UniProtKB-KW"/>
</dbReference>
<organism>
    <name type="scientific">Terebra anilis</name>
    <name type="common">Auger snail</name>
    <name type="synonym">Cinguloterebra anilis</name>
    <dbReference type="NCBI Taxonomy" id="553697"/>
    <lineage>
        <taxon>Eukaryota</taxon>
        <taxon>Metazoa</taxon>
        <taxon>Spiralia</taxon>
        <taxon>Lophotrochozoa</taxon>
        <taxon>Mollusca</taxon>
        <taxon>Gastropoda</taxon>
        <taxon>Caenogastropoda</taxon>
        <taxon>Neogastropoda</taxon>
        <taxon>Conoidea</taxon>
        <taxon>Terebridae</taxon>
        <taxon>Terebra</taxon>
    </lineage>
</organism>
<comment type="subcellular location">
    <subcellularLocation>
        <location evidence="4">Secreted</location>
    </subcellularLocation>
</comment>
<comment type="tissue specificity">
    <text evidence="4">Expressed by the venom duct.</text>
</comment>
<comment type="domain">
    <text>The cysteine framework is XV (C-C-CC-C-C-C-C).</text>
</comment>
<comment type="PTM">
    <text evidence="3">Contains 4 disulfide bonds.</text>
</comment>